<evidence type="ECO:0000255" key="1">
    <source>
        <dbReference type="HAMAP-Rule" id="MF_01241"/>
    </source>
</evidence>
<gene>
    <name evidence="1" type="primary">nagB</name>
    <name type="ordered locus">LJ_1823</name>
</gene>
<name>NAGB_LACJO</name>
<feature type="chain" id="PRO_1000066994" description="Glucosamine-6-phosphate deaminase">
    <location>
        <begin position="1"/>
        <end position="239"/>
    </location>
</feature>
<feature type="active site" description="Proton acceptor; for enolization step" evidence="1">
    <location>
        <position position="62"/>
    </location>
</feature>
<feature type="active site" description="For ring-opening step" evidence="1">
    <location>
        <position position="128"/>
    </location>
</feature>
<feature type="active site" description="Proton acceptor; for ring-opening step" evidence="1">
    <location>
        <position position="130"/>
    </location>
</feature>
<feature type="active site" description="For ring-opening step" evidence="1">
    <location>
        <position position="135"/>
    </location>
</feature>
<dbReference type="EC" id="3.5.99.6" evidence="1"/>
<dbReference type="EMBL" id="AE017198">
    <property type="protein sequence ID" value="AAS09768.1"/>
    <property type="molecule type" value="Genomic_DNA"/>
</dbReference>
<dbReference type="RefSeq" id="WP_004898209.1">
    <property type="nucleotide sequence ID" value="NC_005362.1"/>
</dbReference>
<dbReference type="SMR" id="Q74HC4"/>
<dbReference type="KEGG" id="ljo:LJ_1823"/>
<dbReference type="eggNOG" id="COG0363">
    <property type="taxonomic scope" value="Bacteria"/>
</dbReference>
<dbReference type="HOGENOM" id="CLU_049611_1_0_9"/>
<dbReference type="UniPathway" id="UPA00629">
    <property type="reaction ID" value="UER00684"/>
</dbReference>
<dbReference type="Proteomes" id="UP000000581">
    <property type="component" value="Chromosome"/>
</dbReference>
<dbReference type="GO" id="GO:0005737">
    <property type="term" value="C:cytoplasm"/>
    <property type="evidence" value="ECO:0007669"/>
    <property type="project" value="TreeGrafter"/>
</dbReference>
<dbReference type="GO" id="GO:0004342">
    <property type="term" value="F:glucosamine-6-phosphate deaminase activity"/>
    <property type="evidence" value="ECO:0007669"/>
    <property type="project" value="UniProtKB-UniRule"/>
</dbReference>
<dbReference type="GO" id="GO:0042802">
    <property type="term" value="F:identical protein binding"/>
    <property type="evidence" value="ECO:0007669"/>
    <property type="project" value="TreeGrafter"/>
</dbReference>
<dbReference type="GO" id="GO:0005975">
    <property type="term" value="P:carbohydrate metabolic process"/>
    <property type="evidence" value="ECO:0007669"/>
    <property type="project" value="InterPro"/>
</dbReference>
<dbReference type="GO" id="GO:0006043">
    <property type="term" value="P:glucosamine catabolic process"/>
    <property type="evidence" value="ECO:0007669"/>
    <property type="project" value="TreeGrafter"/>
</dbReference>
<dbReference type="GO" id="GO:0006046">
    <property type="term" value="P:N-acetylglucosamine catabolic process"/>
    <property type="evidence" value="ECO:0007669"/>
    <property type="project" value="TreeGrafter"/>
</dbReference>
<dbReference type="GO" id="GO:0019262">
    <property type="term" value="P:N-acetylneuraminate catabolic process"/>
    <property type="evidence" value="ECO:0007669"/>
    <property type="project" value="UniProtKB-UniRule"/>
</dbReference>
<dbReference type="CDD" id="cd01399">
    <property type="entry name" value="GlcN6P_deaminase"/>
    <property type="match status" value="1"/>
</dbReference>
<dbReference type="FunFam" id="3.40.50.1360:FF:000003">
    <property type="entry name" value="Glucosamine-6-phosphate deaminase"/>
    <property type="match status" value="1"/>
</dbReference>
<dbReference type="Gene3D" id="3.40.50.1360">
    <property type="match status" value="1"/>
</dbReference>
<dbReference type="HAMAP" id="MF_01241">
    <property type="entry name" value="GlcN6P_deamin"/>
    <property type="match status" value="1"/>
</dbReference>
<dbReference type="InterPro" id="IPR006148">
    <property type="entry name" value="Glc/Gal-6P_isomerase"/>
</dbReference>
<dbReference type="InterPro" id="IPR004547">
    <property type="entry name" value="Glucosamine6P_isomerase"/>
</dbReference>
<dbReference type="InterPro" id="IPR018321">
    <property type="entry name" value="Glucosamine6P_isomerase_CS"/>
</dbReference>
<dbReference type="InterPro" id="IPR037171">
    <property type="entry name" value="NagB/RpiA_transferase-like"/>
</dbReference>
<dbReference type="PANTHER" id="PTHR11280">
    <property type="entry name" value="GLUCOSAMINE-6-PHOSPHATE ISOMERASE"/>
    <property type="match status" value="1"/>
</dbReference>
<dbReference type="PANTHER" id="PTHR11280:SF5">
    <property type="entry name" value="GLUCOSAMINE-6-PHOSPHATE ISOMERASE"/>
    <property type="match status" value="1"/>
</dbReference>
<dbReference type="Pfam" id="PF01182">
    <property type="entry name" value="Glucosamine_iso"/>
    <property type="match status" value="1"/>
</dbReference>
<dbReference type="SUPFAM" id="SSF100950">
    <property type="entry name" value="NagB/RpiA/CoA transferase-like"/>
    <property type="match status" value="1"/>
</dbReference>
<dbReference type="PROSITE" id="PS01161">
    <property type="entry name" value="GLC_GALNAC_ISOMERASE"/>
    <property type="match status" value="1"/>
</dbReference>
<sequence length="239" mass="26590">MKIIVTKDNIEGGTKAFEIIKKGMEDGDKVLGLATGSSPIPLYDDMCDSDLDFSDMTSINLDEYYGLNPDNDQSYHYFMQKHLFDKKPFKHSYIPNGMAKDIDEEVDRYNDIIAANPIDIQILGIGRNGHIAFNEPGTPFGSLTHKVQLTESTIKANSRFFDNEDEVPRQAICMGIKSIMQSKKIVLLAFGESKQDAVKALVEGPVTEEVPASILQDHPDVTVICDEVAAAKLDPKYRN</sequence>
<proteinExistence type="inferred from homology"/>
<organism>
    <name type="scientific">Lactobacillus johnsonii (strain CNCM I-12250 / La1 / NCC 533)</name>
    <dbReference type="NCBI Taxonomy" id="257314"/>
    <lineage>
        <taxon>Bacteria</taxon>
        <taxon>Bacillati</taxon>
        <taxon>Bacillota</taxon>
        <taxon>Bacilli</taxon>
        <taxon>Lactobacillales</taxon>
        <taxon>Lactobacillaceae</taxon>
        <taxon>Lactobacillus</taxon>
    </lineage>
</organism>
<protein>
    <recommendedName>
        <fullName evidence="1">Glucosamine-6-phosphate deaminase</fullName>
        <ecNumber evidence="1">3.5.99.6</ecNumber>
    </recommendedName>
    <alternativeName>
        <fullName evidence="1">GlcN6P deaminase</fullName>
        <shortName evidence="1">GNPDA</shortName>
    </alternativeName>
    <alternativeName>
        <fullName evidence="1">Glucosamine-6-phosphate isomerase</fullName>
    </alternativeName>
</protein>
<accession>Q74HC4</accession>
<keyword id="KW-0119">Carbohydrate metabolism</keyword>
<keyword id="KW-0378">Hydrolase</keyword>
<comment type="function">
    <text evidence="1">Catalyzes the reversible isomerization-deamination of glucosamine 6-phosphate (GlcN6P) to form fructose 6-phosphate (Fru6P) and ammonium ion.</text>
</comment>
<comment type="catalytic activity">
    <reaction evidence="1">
        <text>alpha-D-glucosamine 6-phosphate + H2O = beta-D-fructose 6-phosphate + NH4(+)</text>
        <dbReference type="Rhea" id="RHEA:12172"/>
        <dbReference type="ChEBI" id="CHEBI:15377"/>
        <dbReference type="ChEBI" id="CHEBI:28938"/>
        <dbReference type="ChEBI" id="CHEBI:57634"/>
        <dbReference type="ChEBI" id="CHEBI:75989"/>
        <dbReference type="EC" id="3.5.99.6"/>
    </reaction>
</comment>
<comment type="pathway">
    <text evidence="1">Amino-sugar metabolism; N-acetylneuraminate degradation; D-fructose 6-phosphate from N-acetylneuraminate: step 5/5.</text>
</comment>
<comment type="similarity">
    <text evidence="1">Belongs to the glucosamine/galactosamine-6-phosphate isomerase family. NagB subfamily.</text>
</comment>
<reference key="1">
    <citation type="journal article" date="2004" name="Proc. Natl. Acad. Sci. U.S.A.">
        <title>The genome sequence of the probiotic intestinal bacterium Lactobacillus johnsonii NCC 533.</title>
        <authorList>
            <person name="Pridmore R.D."/>
            <person name="Berger B."/>
            <person name="Desiere F."/>
            <person name="Vilanova D."/>
            <person name="Barretto C."/>
            <person name="Pittet A.-C."/>
            <person name="Zwahlen M.-C."/>
            <person name="Rouvet M."/>
            <person name="Altermann E."/>
            <person name="Barrangou R."/>
            <person name="Mollet B."/>
            <person name="Mercenier A."/>
            <person name="Klaenhammer T."/>
            <person name="Arigoni F."/>
            <person name="Schell M.A."/>
        </authorList>
    </citation>
    <scope>NUCLEOTIDE SEQUENCE [LARGE SCALE GENOMIC DNA]</scope>
    <source>
        <strain>CNCM I-1225 / La1 / NCC 533</strain>
    </source>
</reference>